<comment type="function">
    <text evidence="1">Catalyzes the epimerization of the S- and R-forms of NAD(P)HX, a damaged form of NAD(P)H that is a result of enzymatic or heat-dependent hydration. This is a prerequisite for the S-specific NAD(P)H-hydrate dehydratase to allow the repair of both epimers of NAD(P)HX.</text>
</comment>
<comment type="catalytic activity">
    <reaction>
        <text>(6R)-NADHX = (6S)-NADHX</text>
        <dbReference type="Rhea" id="RHEA:32215"/>
        <dbReference type="ChEBI" id="CHEBI:64074"/>
        <dbReference type="ChEBI" id="CHEBI:64075"/>
        <dbReference type="EC" id="5.1.99.6"/>
    </reaction>
</comment>
<comment type="catalytic activity">
    <reaction>
        <text>(6R)-NADPHX = (6S)-NADPHX</text>
        <dbReference type="Rhea" id="RHEA:32227"/>
        <dbReference type="ChEBI" id="CHEBI:64076"/>
        <dbReference type="ChEBI" id="CHEBI:64077"/>
        <dbReference type="EC" id="5.1.99.6"/>
    </reaction>
</comment>
<comment type="cofactor">
    <cofactor evidence="1">
        <name>K(+)</name>
        <dbReference type="ChEBI" id="CHEBI:29103"/>
    </cofactor>
    <text evidence="1">Binds 1 potassium ion per subunit.</text>
</comment>
<comment type="similarity">
    <text evidence="1">Belongs to the NnrE/AIBP family.</text>
</comment>
<feature type="chain" id="PRO_0000416323" description="NAD(P)H-hydrate epimerase">
    <location>
        <begin position="1"/>
        <end position="223"/>
    </location>
</feature>
<feature type="domain" description="YjeF N-terminal" evidence="1">
    <location>
        <begin position="9"/>
        <end position="211"/>
    </location>
</feature>
<feature type="binding site" evidence="1">
    <location>
        <begin position="60"/>
        <end position="64"/>
    </location>
    <ligand>
        <name>(6S)-NADPHX</name>
        <dbReference type="ChEBI" id="CHEBI:64076"/>
    </ligand>
</feature>
<feature type="binding site" evidence="1">
    <location>
        <position position="61"/>
    </location>
    <ligand>
        <name>K(+)</name>
        <dbReference type="ChEBI" id="CHEBI:29103"/>
    </ligand>
</feature>
<feature type="binding site" evidence="1">
    <location>
        <position position="120"/>
    </location>
    <ligand>
        <name>K(+)</name>
        <dbReference type="ChEBI" id="CHEBI:29103"/>
    </ligand>
</feature>
<feature type="binding site" evidence="1">
    <location>
        <begin position="124"/>
        <end position="130"/>
    </location>
    <ligand>
        <name>(6S)-NADPHX</name>
        <dbReference type="ChEBI" id="CHEBI:64076"/>
    </ligand>
</feature>
<feature type="binding site" evidence="1">
    <location>
        <position position="153"/>
    </location>
    <ligand>
        <name>(6S)-NADPHX</name>
        <dbReference type="ChEBI" id="CHEBI:64076"/>
    </ligand>
</feature>
<feature type="binding site" evidence="1">
    <location>
        <position position="156"/>
    </location>
    <ligand>
        <name>K(+)</name>
        <dbReference type="ChEBI" id="CHEBI:29103"/>
    </ligand>
</feature>
<reference key="1">
    <citation type="journal article" date="2005" name="Nature">
        <title>The genome of the protist parasite Entamoeba histolytica.</title>
        <authorList>
            <person name="Loftus B.J."/>
            <person name="Anderson I."/>
            <person name="Davies R."/>
            <person name="Alsmark U.C."/>
            <person name="Samuelson J."/>
            <person name="Amedeo P."/>
            <person name="Roncaglia P."/>
            <person name="Berriman M."/>
            <person name="Hirt R.P."/>
            <person name="Mann B.J."/>
            <person name="Nozaki T."/>
            <person name="Suh B."/>
            <person name="Pop M."/>
            <person name="Duchene M."/>
            <person name="Ackers J."/>
            <person name="Tannich E."/>
            <person name="Leippe M."/>
            <person name="Hofer M."/>
            <person name="Bruchhaus I."/>
            <person name="Willhoeft U."/>
            <person name="Bhattacharya A."/>
            <person name="Chillingworth T."/>
            <person name="Churcher C.M."/>
            <person name="Hance Z."/>
            <person name="Harris B."/>
            <person name="Harris D."/>
            <person name="Jagels K."/>
            <person name="Moule S."/>
            <person name="Mungall K.L."/>
            <person name="Ormond D."/>
            <person name="Squares R."/>
            <person name="Whitehead S."/>
            <person name="Quail M.A."/>
            <person name="Rabbinowitsch E."/>
            <person name="Norbertczak H."/>
            <person name="Price C."/>
            <person name="Wang Z."/>
            <person name="Guillen N."/>
            <person name="Gilchrist C."/>
            <person name="Stroup S.E."/>
            <person name="Bhattacharya S."/>
            <person name="Lohia A."/>
            <person name="Foster P.G."/>
            <person name="Sicheritz-Ponten T."/>
            <person name="Weber C."/>
            <person name="Singh U."/>
            <person name="Mukherjee C."/>
            <person name="El-Sayed N.M.A."/>
            <person name="Petri W.A."/>
            <person name="Clark C.G."/>
            <person name="Embley T.M."/>
            <person name="Barrell B.G."/>
            <person name="Fraser C.M."/>
            <person name="Hall N."/>
        </authorList>
    </citation>
    <scope>NUCLEOTIDE SEQUENCE [LARGE SCALE GENOMIC DNA]</scope>
    <source>
        <strain>ATCC 30459 / HM-1:IMSS / ABRM</strain>
    </source>
</reference>
<reference key="2">
    <citation type="journal article" date="2010" name="PLoS Negl. Trop. Dis.">
        <title>New assembly, reannotation and analysis of the Entamoeba histolytica genome reveal new genomic features and protein content information.</title>
        <authorList>
            <person name="Lorenzi H.A."/>
            <person name="Puiu D."/>
            <person name="Miller J.R."/>
            <person name="Brinkac L.M."/>
            <person name="Amedeo P."/>
            <person name="Hall N."/>
            <person name="Caler E.V."/>
        </authorList>
    </citation>
    <scope>GENOME REANNOTATION</scope>
    <source>
        <strain>ATCC 30459 / HM-1:IMSS / ABRM</strain>
    </source>
</reference>
<organism>
    <name type="scientific">Entamoeba histolytica (strain ATCC 30459 / HM-1:IMSS / ABRM)</name>
    <dbReference type="NCBI Taxonomy" id="294381"/>
    <lineage>
        <taxon>Eukaryota</taxon>
        <taxon>Amoebozoa</taxon>
        <taxon>Evosea</taxon>
        <taxon>Archamoebae</taxon>
        <taxon>Mastigamoebida</taxon>
        <taxon>Entamoebidae</taxon>
        <taxon>Entamoeba</taxon>
    </lineage>
</organism>
<keyword id="KW-0413">Isomerase</keyword>
<keyword id="KW-0479">Metal-binding</keyword>
<keyword id="KW-0520">NAD</keyword>
<keyword id="KW-0521">NADP</keyword>
<keyword id="KW-0547">Nucleotide-binding</keyword>
<keyword id="KW-0630">Potassium</keyword>
<keyword id="KW-1185">Reference proteome</keyword>
<evidence type="ECO:0000255" key="1">
    <source>
        <dbReference type="HAMAP-Rule" id="MF_03159"/>
    </source>
</evidence>
<dbReference type="EC" id="5.1.99.6"/>
<dbReference type="EMBL" id="DS571222">
    <property type="protein sequence ID" value="EAL49841.2"/>
    <property type="molecule type" value="Genomic_DNA"/>
</dbReference>
<dbReference type="RefSeq" id="XP_655227.2">
    <property type="nucleotide sequence ID" value="XM_650135.2"/>
</dbReference>
<dbReference type="SMR" id="C4M2B8"/>
<dbReference type="FunCoup" id="C4M2B8">
    <property type="interactions" value="395"/>
</dbReference>
<dbReference type="STRING" id="5759.C4M2B8"/>
<dbReference type="EnsemblProtists" id="rna_EHI_136490-1">
    <property type="protein sequence ID" value="rna_EHI_136490-1"/>
    <property type="gene ID" value="EHI_136490"/>
</dbReference>
<dbReference type="GeneID" id="3409545"/>
<dbReference type="KEGG" id="ehi:EHI_136490"/>
<dbReference type="VEuPathDB" id="AmoebaDB:EHI5A_216250"/>
<dbReference type="VEuPathDB" id="AmoebaDB:EHI7A_201730"/>
<dbReference type="VEuPathDB" id="AmoebaDB:EHI8A_233120"/>
<dbReference type="VEuPathDB" id="AmoebaDB:EHI_136490"/>
<dbReference type="VEuPathDB" id="AmoebaDB:KM1_277670"/>
<dbReference type="eggNOG" id="KOG2585">
    <property type="taxonomic scope" value="Eukaryota"/>
</dbReference>
<dbReference type="HOGENOM" id="CLU_024853_3_0_1"/>
<dbReference type="InParanoid" id="C4M2B8"/>
<dbReference type="OMA" id="RHLFHYG"/>
<dbReference type="OrthoDB" id="10064708at2759"/>
<dbReference type="Proteomes" id="UP000001926">
    <property type="component" value="Partially assembled WGS sequence"/>
</dbReference>
<dbReference type="GO" id="GO:0005739">
    <property type="term" value="C:mitochondrion"/>
    <property type="evidence" value="ECO:0000318"/>
    <property type="project" value="GO_Central"/>
</dbReference>
<dbReference type="GO" id="GO:0046872">
    <property type="term" value="F:metal ion binding"/>
    <property type="evidence" value="ECO:0007669"/>
    <property type="project" value="UniProtKB-KW"/>
</dbReference>
<dbReference type="GO" id="GO:0052856">
    <property type="term" value="F:NAD(P)HX epimerase activity"/>
    <property type="evidence" value="ECO:0000318"/>
    <property type="project" value="GO_Central"/>
</dbReference>
<dbReference type="GO" id="GO:0000166">
    <property type="term" value="F:nucleotide binding"/>
    <property type="evidence" value="ECO:0007669"/>
    <property type="project" value="UniProtKB-KW"/>
</dbReference>
<dbReference type="FunFam" id="3.40.50.10260:FF:000014">
    <property type="entry name" value="NAD(P)H-hydrate epimerase"/>
    <property type="match status" value="1"/>
</dbReference>
<dbReference type="Gene3D" id="3.40.50.10260">
    <property type="entry name" value="YjeF N-terminal domain"/>
    <property type="match status" value="1"/>
</dbReference>
<dbReference type="HAMAP" id="MF_01966">
    <property type="entry name" value="NADHX_epimerase"/>
    <property type="match status" value="1"/>
</dbReference>
<dbReference type="InterPro" id="IPR004443">
    <property type="entry name" value="YjeF_N_dom"/>
</dbReference>
<dbReference type="InterPro" id="IPR036652">
    <property type="entry name" value="YjeF_N_dom_sf"/>
</dbReference>
<dbReference type="InterPro" id="IPR032976">
    <property type="entry name" value="YJEFN_prot_NAXE-like"/>
</dbReference>
<dbReference type="NCBIfam" id="TIGR00197">
    <property type="entry name" value="yjeF_nterm"/>
    <property type="match status" value="1"/>
</dbReference>
<dbReference type="PANTHER" id="PTHR13232">
    <property type="entry name" value="NAD(P)H-HYDRATE EPIMERASE"/>
    <property type="match status" value="1"/>
</dbReference>
<dbReference type="PANTHER" id="PTHR13232:SF10">
    <property type="entry name" value="NAD(P)H-HYDRATE EPIMERASE"/>
    <property type="match status" value="1"/>
</dbReference>
<dbReference type="Pfam" id="PF03853">
    <property type="entry name" value="YjeF_N"/>
    <property type="match status" value="1"/>
</dbReference>
<dbReference type="SUPFAM" id="SSF64153">
    <property type="entry name" value="YjeF N-terminal domain-like"/>
    <property type="match status" value="1"/>
</dbReference>
<dbReference type="PROSITE" id="PS51385">
    <property type="entry name" value="YJEF_N"/>
    <property type="match status" value="1"/>
</dbReference>
<proteinExistence type="inferred from homology"/>
<protein>
    <recommendedName>
        <fullName evidence="1">NAD(P)H-hydrate epimerase</fullName>
        <ecNumber>5.1.99.6</ecNumber>
    </recommendedName>
    <alternativeName>
        <fullName evidence="1">NAD(P)HX epimerase</fullName>
    </alternativeName>
</protein>
<gene>
    <name type="ORF">EHI_136490</name>
</gene>
<sequence length="223" mass="25079">MQYLTQEQAIKLDEELMGKYKYSLVQLMEIAGLAVAQVVTKEYPIEKGNKRVLILCGPGNNGGDGLVCGRYLSLFGYEVTVFYPKQSKNEHLQLLIKQLEIQDIPVVTELSSFEYDAIVDAVFGFSFKGPVRGIFKDIFSHINSLKVPIISVDIPSGWDVEQGYLQDGIQRCDVLISLSAPKLGVKNFKGIHYLGGRFIPLELKDKLHLILPYKENELIVKIN</sequence>
<accession>C4M2B8</accession>
<name>NNRE_ENTH1</name>